<accession>Q3A818</accession>
<reference key="1">
    <citation type="submission" date="2005-10" db="EMBL/GenBank/DDBJ databases">
        <title>Complete sequence of Pelobacter carbinolicus DSM 2380.</title>
        <authorList>
            <person name="Copeland A."/>
            <person name="Lucas S."/>
            <person name="Lapidus A."/>
            <person name="Barry K."/>
            <person name="Detter J.C."/>
            <person name="Glavina T."/>
            <person name="Hammon N."/>
            <person name="Israni S."/>
            <person name="Pitluck S."/>
            <person name="Chertkov O."/>
            <person name="Schmutz J."/>
            <person name="Larimer F."/>
            <person name="Land M."/>
            <person name="Kyrpides N."/>
            <person name="Ivanova N."/>
            <person name="Richardson P."/>
        </authorList>
    </citation>
    <scope>NUCLEOTIDE SEQUENCE [LARGE SCALE GENOMIC DNA]</scope>
    <source>
        <strain>DSM 2380 / NBRC 103641 / GraBd1</strain>
    </source>
</reference>
<protein>
    <recommendedName>
        <fullName evidence="1">NADH-quinone oxidoreductase subunit K</fullName>
        <ecNumber evidence="1">7.1.1.-</ecNumber>
    </recommendedName>
    <alternativeName>
        <fullName evidence="1">NADH dehydrogenase I subunit K</fullName>
    </alternativeName>
    <alternativeName>
        <fullName evidence="1">NDH-1 subunit K</fullName>
    </alternativeName>
</protein>
<sequence length="101" mass="10752">MIVPLGQVLMLAGLLFVAGLVGVLLRRNLIMILIGVEIMLNAVGLVLVGASAYWRHPDGQLVALLLMAVAAAEVTIALALVVYLKRSRGTIDINRFDGMKG</sequence>
<keyword id="KW-0997">Cell inner membrane</keyword>
<keyword id="KW-1003">Cell membrane</keyword>
<keyword id="KW-0472">Membrane</keyword>
<keyword id="KW-0520">NAD</keyword>
<keyword id="KW-0874">Quinone</keyword>
<keyword id="KW-1185">Reference proteome</keyword>
<keyword id="KW-1278">Translocase</keyword>
<keyword id="KW-0812">Transmembrane</keyword>
<keyword id="KW-1133">Transmembrane helix</keyword>
<keyword id="KW-0813">Transport</keyword>
<keyword id="KW-0830">Ubiquinone</keyword>
<proteinExistence type="inferred from homology"/>
<dbReference type="EC" id="7.1.1.-" evidence="1"/>
<dbReference type="EMBL" id="CP000142">
    <property type="protein sequence ID" value="ABA87474.1"/>
    <property type="molecule type" value="Genomic_DNA"/>
</dbReference>
<dbReference type="RefSeq" id="WP_011339874.1">
    <property type="nucleotide sequence ID" value="NC_007498.2"/>
</dbReference>
<dbReference type="SMR" id="Q3A818"/>
<dbReference type="STRING" id="338963.Pcar_0213"/>
<dbReference type="KEGG" id="pca:Pcar_0213"/>
<dbReference type="eggNOG" id="COG0713">
    <property type="taxonomic scope" value="Bacteria"/>
</dbReference>
<dbReference type="HOGENOM" id="CLU_144724_0_1_7"/>
<dbReference type="OrthoDB" id="9810120at2"/>
<dbReference type="Proteomes" id="UP000002534">
    <property type="component" value="Chromosome"/>
</dbReference>
<dbReference type="GO" id="GO:0030964">
    <property type="term" value="C:NADH dehydrogenase complex"/>
    <property type="evidence" value="ECO:0007669"/>
    <property type="project" value="TreeGrafter"/>
</dbReference>
<dbReference type="GO" id="GO:0005886">
    <property type="term" value="C:plasma membrane"/>
    <property type="evidence" value="ECO:0007669"/>
    <property type="project" value="UniProtKB-SubCell"/>
</dbReference>
<dbReference type="GO" id="GO:0050136">
    <property type="term" value="F:NADH:ubiquinone reductase (non-electrogenic) activity"/>
    <property type="evidence" value="ECO:0007669"/>
    <property type="project" value="UniProtKB-UniRule"/>
</dbReference>
<dbReference type="GO" id="GO:0048038">
    <property type="term" value="F:quinone binding"/>
    <property type="evidence" value="ECO:0007669"/>
    <property type="project" value="UniProtKB-KW"/>
</dbReference>
<dbReference type="GO" id="GO:0042773">
    <property type="term" value="P:ATP synthesis coupled electron transport"/>
    <property type="evidence" value="ECO:0007669"/>
    <property type="project" value="InterPro"/>
</dbReference>
<dbReference type="FunFam" id="1.10.287.3510:FF:000001">
    <property type="entry name" value="NADH-quinone oxidoreductase subunit K"/>
    <property type="match status" value="1"/>
</dbReference>
<dbReference type="Gene3D" id="1.10.287.3510">
    <property type="match status" value="1"/>
</dbReference>
<dbReference type="HAMAP" id="MF_01456">
    <property type="entry name" value="NDH1_NuoK"/>
    <property type="match status" value="1"/>
</dbReference>
<dbReference type="InterPro" id="IPR001133">
    <property type="entry name" value="NADH_UbQ_OxRdtase_chain4L/K"/>
</dbReference>
<dbReference type="InterPro" id="IPR039428">
    <property type="entry name" value="NUOK/Mnh_C1-like"/>
</dbReference>
<dbReference type="NCBIfam" id="NF004320">
    <property type="entry name" value="PRK05715.1-2"/>
    <property type="match status" value="1"/>
</dbReference>
<dbReference type="PANTHER" id="PTHR11434:SF16">
    <property type="entry name" value="NADH-UBIQUINONE OXIDOREDUCTASE CHAIN 4L"/>
    <property type="match status" value="1"/>
</dbReference>
<dbReference type="PANTHER" id="PTHR11434">
    <property type="entry name" value="NADH-UBIQUINONE OXIDOREDUCTASE SUBUNIT ND4L"/>
    <property type="match status" value="1"/>
</dbReference>
<dbReference type="Pfam" id="PF00420">
    <property type="entry name" value="Oxidored_q2"/>
    <property type="match status" value="1"/>
</dbReference>
<organism>
    <name type="scientific">Syntrophotalea carbinolica (strain DSM 2380 / NBRC 103641 / GraBd1)</name>
    <name type="common">Pelobacter carbinolicus</name>
    <dbReference type="NCBI Taxonomy" id="338963"/>
    <lineage>
        <taxon>Bacteria</taxon>
        <taxon>Pseudomonadati</taxon>
        <taxon>Thermodesulfobacteriota</taxon>
        <taxon>Desulfuromonadia</taxon>
        <taxon>Desulfuromonadales</taxon>
        <taxon>Syntrophotaleaceae</taxon>
        <taxon>Syntrophotalea</taxon>
    </lineage>
</organism>
<evidence type="ECO:0000255" key="1">
    <source>
        <dbReference type="HAMAP-Rule" id="MF_01456"/>
    </source>
</evidence>
<name>NUOK_SYNC1</name>
<comment type="function">
    <text evidence="1">NDH-1 shuttles electrons from NADH, via FMN and iron-sulfur (Fe-S) centers, to quinones in the respiratory chain. The immediate electron acceptor for the enzyme in this species is believed to be ubiquinone. Couples the redox reaction to proton translocation (for every two electrons transferred, four hydrogen ions are translocated across the cytoplasmic membrane), and thus conserves the redox energy in a proton gradient.</text>
</comment>
<comment type="catalytic activity">
    <reaction evidence="1">
        <text>a quinone + NADH + 5 H(+)(in) = a quinol + NAD(+) + 4 H(+)(out)</text>
        <dbReference type="Rhea" id="RHEA:57888"/>
        <dbReference type="ChEBI" id="CHEBI:15378"/>
        <dbReference type="ChEBI" id="CHEBI:24646"/>
        <dbReference type="ChEBI" id="CHEBI:57540"/>
        <dbReference type="ChEBI" id="CHEBI:57945"/>
        <dbReference type="ChEBI" id="CHEBI:132124"/>
    </reaction>
</comment>
<comment type="subunit">
    <text evidence="1">NDH-1 is composed of 14 different subunits. Subunits NuoA, H, J, K, L, M, N constitute the membrane sector of the complex.</text>
</comment>
<comment type="subcellular location">
    <subcellularLocation>
        <location evidence="1">Cell inner membrane</location>
        <topology evidence="1">Multi-pass membrane protein</topology>
    </subcellularLocation>
</comment>
<comment type="similarity">
    <text evidence="1">Belongs to the complex I subunit 4L family.</text>
</comment>
<feature type="chain" id="PRO_0000390156" description="NADH-quinone oxidoreductase subunit K">
    <location>
        <begin position="1"/>
        <end position="101"/>
    </location>
</feature>
<feature type="transmembrane region" description="Helical" evidence="1">
    <location>
        <begin position="5"/>
        <end position="25"/>
    </location>
</feature>
<feature type="transmembrane region" description="Helical" evidence="1">
    <location>
        <begin position="29"/>
        <end position="49"/>
    </location>
</feature>
<feature type="transmembrane region" description="Helical" evidence="1">
    <location>
        <begin position="62"/>
        <end position="82"/>
    </location>
</feature>
<gene>
    <name evidence="1" type="primary">nuoK</name>
    <name type="ordered locus">Pcar_0213</name>
</gene>